<proteinExistence type="inferred from homology"/>
<reference key="1">
    <citation type="journal article" date="2007" name="PLoS ONE">
        <title>Analysis of the neurotoxin complex genes in Clostridium botulinum A1-A4 and B1 strains: BoNT/A3, /Ba4 and /B1 clusters are located within plasmids.</title>
        <authorList>
            <person name="Smith T.J."/>
            <person name="Hill K.K."/>
            <person name="Foley B.T."/>
            <person name="Detter J.C."/>
            <person name="Munk A.C."/>
            <person name="Bruce D.C."/>
            <person name="Doggett N.A."/>
            <person name="Smith L.A."/>
            <person name="Marks J.D."/>
            <person name="Xie G."/>
            <person name="Brettin T.S."/>
        </authorList>
    </citation>
    <scope>NUCLEOTIDE SEQUENCE [LARGE SCALE GENOMIC DNA]</scope>
    <source>
        <strain>Loch Maree / Type A3</strain>
    </source>
</reference>
<dbReference type="EMBL" id="CP000962">
    <property type="protein sequence ID" value="ACA56570.1"/>
    <property type="molecule type" value="Genomic_DNA"/>
</dbReference>
<dbReference type="RefSeq" id="WP_004451027.1">
    <property type="nucleotide sequence ID" value="NC_010520.1"/>
</dbReference>
<dbReference type="SMR" id="B1KWN8"/>
<dbReference type="GeneID" id="5186703"/>
<dbReference type="KEGG" id="cbl:CLK_1825"/>
<dbReference type="HOGENOM" id="CLU_100590_5_0_9"/>
<dbReference type="GO" id="GO:0005737">
    <property type="term" value="C:cytoplasm"/>
    <property type="evidence" value="ECO:0007669"/>
    <property type="project" value="UniProtKB-ARBA"/>
</dbReference>
<dbReference type="GO" id="GO:0015935">
    <property type="term" value="C:small ribosomal subunit"/>
    <property type="evidence" value="ECO:0007669"/>
    <property type="project" value="TreeGrafter"/>
</dbReference>
<dbReference type="GO" id="GO:0003735">
    <property type="term" value="F:structural constituent of ribosome"/>
    <property type="evidence" value="ECO:0007669"/>
    <property type="project" value="InterPro"/>
</dbReference>
<dbReference type="GO" id="GO:0006412">
    <property type="term" value="P:translation"/>
    <property type="evidence" value="ECO:0007669"/>
    <property type="project" value="UniProtKB-UniRule"/>
</dbReference>
<dbReference type="FunFam" id="3.30.1320.10:FF:000002">
    <property type="entry name" value="30S ribosomal protein S16"/>
    <property type="match status" value="1"/>
</dbReference>
<dbReference type="Gene3D" id="3.30.1320.10">
    <property type="match status" value="1"/>
</dbReference>
<dbReference type="HAMAP" id="MF_00385">
    <property type="entry name" value="Ribosomal_bS16"/>
    <property type="match status" value="1"/>
</dbReference>
<dbReference type="InterPro" id="IPR000307">
    <property type="entry name" value="Ribosomal_bS16"/>
</dbReference>
<dbReference type="InterPro" id="IPR020592">
    <property type="entry name" value="Ribosomal_bS16_CS"/>
</dbReference>
<dbReference type="InterPro" id="IPR023803">
    <property type="entry name" value="Ribosomal_bS16_dom_sf"/>
</dbReference>
<dbReference type="NCBIfam" id="TIGR00002">
    <property type="entry name" value="S16"/>
    <property type="match status" value="1"/>
</dbReference>
<dbReference type="PANTHER" id="PTHR12919">
    <property type="entry name" value="30S RIBOSOMAL PROTEIN S16"/>
    <property type="match status" value="1"/>
</dbReference>
<dbReference type="PANTHER" id="PTHR12919:SF20">
    <property type="entry name" value="SMALL RIBOSOMAL SUBUNIT PROTEIN BS16M"/>
    <property type="match status" value="1"/>
</dbReference>
<dbReference type="Pfam" id="PF00886">
    <property type="entry name" value="Ribosomal_S16"/>
    <property type="match status" value="1"/>
</dbReference>
<dbReference type="SUPFAM" id="SSF54565">
    <property type="entry name" value="Ribosomal protein S16"/>
    <property type="match status" value="1"/>
</dbReference>
<dbReference type="PROSITE" id="PS00732">
    <property type="entry name" value="RIBOSOMAL_S16"/>
    <property type="match status" value="1"/>
</dbReference>
<accession>B1KWN8</accession>
<comment type="similarity">
    <text evidence="1">Belongs to the bacterial ribosomal protein bS16 family.</text>
</comment>
<protein>
    <recommendedName>
        <fullName evidence="1">Small ribosomal subunit protein bS16</fullName>
    </recommendedName>
    <alternativeName>
        <fullName evidence="2">30S ribosomal protein S16</fullName>
    </alternativeName>
</protein>
<sequence length="82" mass="9320">MAVKIRLKRMGAKKAPFYRVVVADSRSPRDGRFVEEIGYYNPITEPSTIKLDEEKVQKWIKNGAQPTDTVKKLIEKAGISVK</sequence>
<organism>
    <name type="scientific">Clostridium botulinum (strain Loch Maree / Type A3)</name>
    <dbReference type="NCBI Taxonomy" id="498214"/>
    <lineage>
        <taxon>Bacteria</taxon>
        <taxon>Bacillati</taxon>
        <taxon>Bacillota</taxon>
        <taxon>Clostridia</taxon>
        <taxon>Eubacteriales</taxon>
        <taxon>Clostridiaceae</taxon>
        <taxon>Clostridium</taxon>
    </lineage>
</organism>
<feature type="chain" id="PRO_1000196371" description="Small ribosomal subunit protein bS16">
    <location>
        <begin position="1"/>
        <end position="82"/>
    </location>
</feature>
<name>RS16_CLOBM</name>
<evidence type="ECO:0000255" key="1">
    <source>
        <dbReference type="HAMAP-Rule" id="MF_00385"/>
    </source>
</evidence>
<evidence type="ECO:0000305" key="2"/>
<keyword id="KW-0687">Ribonucleoprotein</keyword>
<keyword id="KW-0689">Ribosomal protein</keyword>
<gene>
    <name evidence="1" type="primary">rpsP</name>
    <name type="ordered locus">CLK_1825</name>
</gene>